<organism>
    <name type="scientific">Mycobacteroides abscessus (strain ATCC 19977 / DSM 44196 / CCUG 20993 / CIP 104536 / JCM 13569 / NCTC 13031 / TMC 1543 / L948)</name>
    <name type="common">Mycobacterium abscessus</name>
    <dbReference type="NCBI Taxonomy" id="561007"/>
    <lineage>
        <taxon>Bacteria</taxon>
        <taxon>Bacillati</taxon>
        <taxon>Actinomycetota</taxon>
        <taxon>Actinomycetes</taxon>
        <taxon>Mycobacteriales</taxon>
        <taxon>Mycobacteriaceae</taxon>
        <taxon>Mycobacteroides</taxon>
        <taxon>Mycobacteroides abscessus</taxon>
    </lineage>
</organism>
<protein>
    <recommendedName>
        <fullName evidence="1">Glutamate-1-semialdehyde 2,1-aminomutase</fullName>
        <shortName evidence="1">GSA</shortName>
        <ecNumber evidence="1">5.4.3.8</ecNumber>
    </recommendedName>
    <alternativeName>
        <fullName evidence="1">Glutamate-1-semialdehyde aminotransferase</fullName>
        <shortName evidence="1">GSA-AT</shortName>
    </alternativeName>
</protein>
<keyword id="KW-0963">Cytoplasm</keyword>
<keyword id="KW-0413">Isomerase</keyword>
<keyword id="KW-0627">Porphyrin biosynthesis</keyword>
<keyword id="KW-0663">Pyridoxal phosphate</keyword>
<keyword id="KW-1185">Reference proteome</keyword>
<reference key="1">
    <citation type="journal article" date="2009" name="PLoS ONE">
        <title>Non mycobacterial virulence genes in the genome of the emerging pathogen Mycobacterium abscessus.</title>
        <authorList>
            <person name="Ripoll F."/>
            <person name="Pasek S."/>
            <person name="Schenowitz C."/>
            <person name="Dossat C."/>
            <person name="Barbe V."/>
            <person name="Rottman M."/>
            <person name="Macheras E."/>
            <person name="Heym B."/>
            <person name="Herrmann J.L."/>
            <person name="Daffe M."/>
            <person name="Brosch R."/>
            <person name="Risler J.L."/>
            <person name="Gaillard J.L."/>
        </authorList>
    </citation>
    <scope>NUCLEOTIDE SEQUENCE [LARGE SCALE GENOMIC DNA]</scope>
    <source>
        <strain>ATCC 19977 / DSM 44196 / CCUG 20993 / CIP 104536 / JCM 13569 / NCTC 13031 / TMC 1543 / L948</strain>
    </source>
</reference>
<sequence length="446" mass="46259">MDDLASAETLDAVSDETPNSARLFADASTVIPGGVNSPVRAFAAVGGVPRFVRSGAGCWLTDVDDNRYVDLVCSWGPLILGHAHPAVVEAVQRAAKDGLSYGAPVEGEIELAREIIDRVQPVEKVRLVNSGTEATMSAVRLARGFTGRPKIVKFAGCYHGHADALLADAGSGLATFGLPSSPGVTGASAADTIVLPYNDIGAVAQVFAEQGDHIAAVITEAAAGNMGTVAPGPDFNAGLRRITENHGALLIMDEVMTGFRVSRSGWYGIDQVAGDLVTFGKVMSGGMPAAAFGGRADIMDRLAPLGPVYQAGTLSGNPVAVAAGLASLRAADAKAYETLDRNADALIALLTASLDAEGVAHHIGRAGNMFSVFFGTEPVRDFQSAKATETWRYPAFFHGLLSRGVYPPASAFETWFVSTALDDEAFDRIADALPAAARAAAAAEEN</sequence>
<dbReference type="EC" id="5.4.3.8" evidence="1"/>
<dbReference type="EMBL" id="CU458896">
    <property type="protein sequence ID" value="CAM64052.1"/>
    <property type="molecule type" value="Genomic_DNA"/>
</dbReference>
<dbReference type="SMR" id="B1MHH1"/>
<dbReference type="KEGG" id="mab:MAB_3978c"/>
<dbReference type="UniPathway" id="UPA00251">
    <property type="reaction ID" value="UER00317"/>
</dbReference>
<dbReference type="Proteomes" id="UP000007137">
    <property type="component" value="Chromosome"/>
</dbReference>
<dbReference type="GO" id="GO:0005737">
    <property type="term" value="C:cytoplasm"/>
    <property type="evidence" value="ECO:0007669"/>
    <property type="project" value="UniProtKB-SubCell"/>
</dbReference>
<dbReference type="GO" id="GO:0042286">
    <property type="term" value="F:glutamate-1-semialdehyde 2,1-aminomutase activity"/>
    <property type="evidence" value="ECO:0007669"/>
    <property type="project" value="UniProtKB-UniRule"/>
</dbReference>
<dbReference type="GO" id="GO:0030170">
    <property type="term" value="F:pyridoxal phosphate binding"/>
    <property type="evidence" value="ECO:0007669"/>
    <property type="project" value="InterPro"/>
</dbReference>
<dbReference type="GO" id="GO:0008483">
    <property type="term" value="F:transaminase activity"/>
    <property type="evidence" value="ECO:0007669"/>
    <property type="project" value="InterPro"/>
</dbReference>
<dbReference type="GO" id="GO:0006782">
    <property type="term" value="P:protoporphyrinogen IX biosynthetic process"/>
    <property type="evidence" value="ECO:0007669"/>
    <property type="project" value="UniProtKB-UniRule"/>
</dbReference>
<dbReference type="CDD" id="cd00610">
    <property type="entry name" value="OAT_like"/>
    <property type="match status" value="1"/>
</dbReference>
<dbReference type="FunFam" id="3.40.640.10:FF:000021">
    <property type="entry name" value="Glutamate-1-semialdehyde 2,1-aminomutase"/>
    <property type="match status" value="1"/>
</dbReference>
<dbReference type="Gene3D" id="3.90.1150.10">
    <property type="entry name" value="Aspartate Aminotransferase, domain 1"/>
    <property type="match status" value="1"/>
</dbReference>
<dbReference type="Gene3D" id="3.40.640.10">
    <property type="entry name" value="Type I PLP-dependent aspartate aminotransferase-like (Major domain)"/>
    <property type="match status" value="1"/>
</dbReference>
<dbReference type="HAMAP" id="MF_00375">
    <property type="entry name" value="HemL_aminotrans_3"/>
    <property type="match status" value="1"/>
</dbReference>
<dbReference type="InterPro" id="IPR004639">
    <property type="entry name" value="4pyrrol_synth_GluAld_NH2Trfase"/>
</dbReference>
<dbReference type="InterPro" id="IPR005814">
    <property type="entry name" value="Aminotrans_3"/>
</dbReference>
<dbReference type="InterPro" id="IPR049704">
    <property type="entry name" value="Aminotrans_3_PPA_site"/>
</dbReference>
<dbReference type="InterPro" id="IPR015424">
    <property type="entry name" value="PyrdxlP-dep_Trfase"/>
</dbReference>
<dbReference type="InterPro" id="IPR015421">
    <property type="entry name" value="PyrdxlP-dep_Trfase_major"/>
</dbReference>
<dbReference type="InterPro" id="IPR015422">
    <property type="entry name" value="PyrdxlP-dep_Trfase_small"/>
</dbReference>
<dbReference type="NCBIfam" id="TIGR00713">
    <property type="entry name" value="hemL"/>
    <property type="match status" value="1"/>
</dbReference>
<dbReference type="NCBIfam" id="NF000818">
    <property type="entry name" value="PRK00062.1"/>
    <property type="match status" value="1"/>
</dbReference>
<dbReference type="PANTHER" id="PTHR43713">
    <property type="entry name" value="GLUTAMATE-1-SEMIALDEHYDE 2,1-AMINOMUTASE"/>
    <property type="match status" value="1"/>
</dbReference>
<dbReference type="PANTHER" id="PTHR43713:SF3">
    <property type="entry name" value="GLUTAMATE-1-SEMIALDEHYDE 2,1-AMINOMUTASE 1, CHLOROPLASTIC-RELATED"/>
    <property type="match status" value="1"/>
</dbReference>
<dbReference type="Pfam" id="PF00202">
    <property type="entry name" value="Aminotran_3"/>
    <property type="match status" value="1"/>
</dbReference>
<dbReference type="SUPFAM" id="SSF53383">
    <property type="entry name" value="PLP-dependent transferases"/>
    <property type="match status" value="1"/>
</dbReference>
<dbReference type="PROSITE" id="PS00600">
    <property type="entry name" value="AA_TRANSFER_CLASS_3"/>
    <property type="match status" value="1"/>
</dbReference>
<comment type="catalytic activity">
    <reaction evidence="1">
        <text>(S)-4-amino-5-oxopentanoate = 5-aminolevulinate</text>
        <dbReference type="Rhea" id="RHEA:14265"/>
        <dbReference type="ChEBI" id="CHEBI:57501"/>
        <dbReference type="ChEBI" id="CHEBI:356416"/>
        <dbReference type="EC" id="5.4.3.8"/>
    </reaction>
</comment>
<comment type="cofactor">
    <cofactor evidence="1">
        <name>pyridoxal 5'-phosphate</name>
        <dbReference type="ChEBI" id="CHEBI:597326"/>
    </cofactor>
</comment>
<comment type="pathway">
    <text evidence="1">Porphyrin-containing compound metabolism; protoporphyrin-IX biosynthesis; 5-aminolevulinate from L-glutamyl-tRNA(Glu): step 2/2.</text>
</comment>
<comment type="subunit">
    <text evidence="1">Homodimer.</text>
</comment>
<comment type="subcellular location">
    <subcellularLocation>
        <location evidence="1">Cytoplasm</location>
    </subcellularLocation>
</comment>
<comment type="similarity">
    <text evidence="1">Belongs to the class-III pyridoxal-phosphate-dependent aminotransferase family. HemL subfamily.</text>
</comment>
<feature type="chain" id="PRO_0000382344" description="Glutamate-1-semialdehyde 2,1-aminomutase">
    <location>
        <begin position="1"/>
        <end position="446"/>
    </location>
</feature>
<feature type="modified residue" description="N6-(pyridoxal phosphate)lysine" evidence="1">
    <location>
        <position position="281"/>
    </location>
</feature>
<gene>
    <name evidence="1" type="primary">hemL</name>
    <name type="ordered locus">MAB_3978c</name>
</gene>
<evidence type="ECO:0000255" key="1">
    <source>
        <dbReference type="HAMAP-Rule" id="MF_00375"/>
    </source>
</evidence>
<proteinExistence type="inferred from homology"/>
<name>GSA_MYCA9</name>
<accession>B1MHH1</accession>